<feature type="chain" id="PRO_1000023606" description="Arginine repressor">
    <location>
        <begin position="1"/>
        <end position="150"/>
    </location>
</feature>
<gene>
    <name evidence="1" type="primary">argR</name>
    <name type="ordered locus">SAB1393c</name>
</gene>
<evidence type="ECO:0000255" key="1">
    <source>
        <dbReference type="HAMAP-Rule" id="MF_00173"/>
    </source>
</evidence>
<accession>Q2YYC1</accession>
<name>ARGR_STAAB</name>
<comment type="function">
    <text evidence="1">Regulates arginine biosynthesis genes.</text>
</comment>
<comment type="pathway">
    <text>Amino-acid biosynthesis; L-arginine biosynthesis [regulation].</text>
</comment>
<comment type="subcellular location">
    <subcellularLocation>
        <location evidence="1">Cytoplasm</location>
    </subcellularLocation>
</comment>
<comment type="similarity">
    <text evidence="1">Belongs to the ArgR family.</text>
</comment>
<organism>
    <name type="scientific">Staphylococcus aureus (strain bovine RF122 / ET3-1)</name>
    <dbReference type="NCBI Taxonomy" id="273036"/>
    <lineage>
        <taxon>Bacteria</taxon>
        <taxon>Bacillati</taxon>
        <taxon>Bacillota</taxon>
        <taxon>Bacilli</taxon>
        <taxon>Bacillales</taxon>
        <taxon>Staphylococcaceae</taxon>
        <taxon>Staphylococcus</taxon>
    </lineage>
</organism>
<protein>
    <recommendedName>
        <fullName evidence="1">Arginine repressor</fullName>
    </recommendedName>
</protein>
<reference key="1">
    <citation type="journal article" date="2007" name="PLoS ONE">
        <title>Molecular correlates of host specialization in Staphylococcus aureus.</title>
        <authorList>
            <person name="Herron-Olson L."/>
            <person name="Fitzgerald J.R."/>
            <person name="Musser J.M."/>
            <person name="Kapur V."/>
        </authorList>
    </citation>
    <scope>NUCLEOTIDE SEQUENCE [LARGE SCALE GENOMIC DNA]</scope>
    <source>
        <strain>bovine RF122 / ET3-1</strain>
    </source>
</reference>
<proteinExistence type="inferred from homology"/>
<keyword id="KW-0028">Amino-acid biosynthesis</keyword>
<keyword id="KW-0055">Arginine biosynthesis</keyword>
<keyword id="KW-0963">Cytoplasm</keyword>
<keyword id="KW-0238">DNA-binding</keyword>
<keyword id="KW-0678">Repressor</keyword>
<keyword id="KW-0804">Transcription</keyword>
<keyword id="KW-0805">Transcription regulation</keyword>
<dbReference type="EMBL" id="AJ938182">
    <property type="protein sequence ID" value="CAI81082.1"/>
    <property type="molecule type" value="Genomic_DNA"/>
</dbReference>
<dbReference type="RefSeq" id="WP_001124985.1">
    <property type="nucleotide sequence ID" value="NC_007622.1"/>
</dbReference>
<dbReference type="SMR" id="Q2YYC1"/>
<dbReference type="GeneID" id="98345891"/>
<dbReference type="KEGG" id="sab:SAB1393c"/>
<dbReference type="HOGENOM" id="CLU_097103_3_0_9"/>
<dbReference type="UniPathway" id="UPA00068"/>
<dbReference type="GO" id="GO:0005737">
    <property type="term" value="C:cytoplasm"/>
    <property type="evidence" value="ECO:0007669"/>
    <property type="project" value="UniProtKB-SubCell"/>
</dbReference>
<dbReference type="GO" id="GO:0034618">
    <property type="term" value="F:arginine binding"/>
    <property type="evidence" value="ECO:0007669"/>
    <property type="project" value="InterPro"/>
</dbReference>
<dbReference type="GO" id="GO:0003677">
    <property type="term" value="F:DNA binding"/>
    <property type="evidence" value="ECO:0007669"/>
    <property type="project" value="UniProtKB-KW"/>
</dbReference>
<dbReference type="GO" id="GO:0003700">
    <property type="term" value="F:DNA-binding transcription factor activity"/>
    <property type="evidence" value="ECO:0007669"/>
    <property type="project" value="UniProtKB-UniRule"/>
</dbReference>
<dbReference type="GO" id="GO:0006526">
    <property type="term" value="P:L-arginine biosynthetic process"/>
    <property type="evidence" value="ECO:0007669"/>
    <property type="project" value="UniProtKB-UniPathway"/>
</dbReference>
<dbReference type="GO" id="GO:0051259">
    <property type="term" value="P:protein complex oligomerization"/>
    <property type="evidence" value="ECO:0007669"/>
    <property type="project" value="InterPro"/>
</dbReference>
<dbReference type="GO" id="GO:1900079">
    <property type="term" value="P:regulation of arginine biosynthetic process"/>
    <property type="evidence" value="ECO:0007669"/>
    <property type="project" value="UniProtKB-UniRule"/>
</dbReference>
<dbReference type="Gene3D" id="3.30.1360.40">
    <property type="match status" value="1"/>
</dbReference>
<dbReference type="Gene3D" id="1.10.10.10">
    <property type="entry name" value="Winged helix-like DNA-binding domain superfamily/Winged helix DNA-binding domain"/>
    <property type="match status" value="1"/>
</dbReference>
<dbReference type="HAMAP" id="MF_00173">
    <property type="entry name" value="Arg_repressor"/>
    <property type="match status" value="1"/>
</dbReference>
<dbReference type="InterPro" id="IPR001669">
    <property type="entry name" value="Arg_repress"/>
</dbReference>
<dbReference type="InterPro" id="IPR020899">
    <property type="entry name" value="Arg_repress_C"/>
</dbReference>
<dbReference type="InterPro" id="IPR036251">
    <property type="entry name" value="Arg_repress_C_sf"/>
</dbReference>
<dbReference type="InterPro" id="IPR020900">
    <property type="entry name" value="Arg_repress_DNA-bd"/>
</dbReference>
<dbReference type="InterPro" id="IPR036388">
    <property type="entry name" value="WH-like_DNA-bd_sf"/>
</dbReference>
<dbReference type="InterPro" id="IPR036390">
    <property type="entry name" value="WH_DNA-bd_sf"/>
</dbReference>
<dbReference type="NCBIfam" id="TIGR01529">
    <property type="entry name" value="argR_whole"/>
    <property type="match status" value="1"/>
</dbReference>
<dbReference type="NCBIfam" id="NF003281">
    <property type="entry name" value="PRK04280.1"/>
    <property type="match status" value="1"/>
</dbReference>
<dbReference type="PANTHER" id="PTHR34471">
    <property type="entry name" value="ARGININE REPRESSOR"/>
    <property type="match status" value="1"/>
</dbReference>
<dbReference type="PANTHER" id="PTHR34471:SF1">
    <property type="entry name" value="ARGININE REPRESSOR"/>
    <property type="match status" value="1"/>
</dbReference>
<dbReference type="Pfam" id="PF01316">
    <property type="entry name" value="Arg_repressor"/>
    <property type="match status" value="1"/>
</dbReference>
<dbReference type="Pfam" id="PF02863">
    <property type="entry name" value="Arg_repressor_C"/>
    <property type="match status" value="1"/>
</dbReference>
<dbReference type="PRINTS" id="PR01467">
    <property type="entry name" value="ARGREPRESSOR"/>
</dbReference>
<dbReference type="SUPFAM" id="SSF55252">
    <property type="entry name" value="C-terminal domain of arginine repressor"/>
    <property type="match status" value="1"/>
</dbReference>
<dbReference type="SUPFAM" id="SSF46785">
    <property type="entry name" value="Winged helix' DNA-binding domain"/>
    <property type="match status" value="1"/>
</dbReference>
<sequence length="150" mass="17098">MPKKSVRHIKIREIISNEQIETQDELVKRLNDYDLNVTQATVSRDIKELQLIKVPIPSGQYVYSLPNDRKFHPLEKLGRYLMDSFVNIDGTDNLLVLKTLPGNAQSIGAILDQINWEEVLGTICGDDTCLIICRSKEASDEIKSRIFNLL</sequence>